<accession>B4TKK7</accession>
<protein>
    <recommendedName>
        <fullName evidence="1">Large ribosomal subunit protein uL29</fullName>
    </recommendedName>
    <alternativeName>
        <fullName evidence="2">50S ribosomal protein L29</fullName>
    </alternativeName>
</protein>
<proteinExistence type="inferred from homology"/>
<gene>
    <name evidence="1" type="primary">rpmC</name>
    <name type="ordered locus">SeHA_C3736</name>
</gene>
<evidence type="ECO:0000255" key="1">
    <source>
        <dbReference type="HAMAP-Rule" id="MF_00374"/>
    </source>
</evidence>
<evidence type="ECO:0000305" key="2"/>
<keyword id="KW-0687">Ribonucleoprotein</keyword>
<keyword id="KW-0689">Ribosomal protein</keyword>
<feature type="chain" id="PRO_1000121812" description="Large ribosomal subunit protein uL29">
    <location>
        <begin position="1"/>
        <end position="63"/>
    </location>
</feature>
<reference key="1">
    <citation type="journal article" date="2011" name="J. Bacteriol.">
        <title>Comparative genomics of 28 Salmonella enterica isolates: evidence for CRISPR-mediated adaptive sublineage evolution.</title>
        <authorList>
            <person name="Fricke W.F."/>
            <person name="Mammel M.K."/>
            <person name="McDermott P.F."/>
            <person name="Tartera C."/>
            <person name="White D.G."/>
            <person name="Leclerc J.E."/>
            <person name="Ravel J."/>
            <person name="Cebula T.A."/>
        </authorList>
    </citation>
    <scope>NUCLEOTIDE SEQUENCE [LARGE SCALE GENOMIC DNA]</scope>
    <source>
        <strain>SL476</strain>
    </source>
</reference>
<sequence length="63" mass="7260">MKAKELREKSVEELNTELLNLLREQFNLRMQAASGQLQQSHLLKQVRRDVARVKTLLTEKAGA</sequence>
<name>RL29_SALHS</name>
<dbReference type="EMBL" id="CP001120">
    <property type="protein sequence ID" value="ACF69633.1"/>
    <property type="molecule type" value="Genomic_DNA"/>
</dbReference>
<dbReference type="RefSeq" id="WP_000644742.1">
    <property type="nucleotide sequence ID" value="NC_011083.1"/>
</dbReference>
<dbReference type="SMR" id="B4TKK7"/>
<dbReference type="GeneID" id="93035739"/>
<dbReference type="KEGG" id="seh:SeHA_C3736"/>
<dbReference type="HOGENOM" id="CLU_158491_1_2_6"/>
<dbReference type="Proteomes" id="UP000001866">
    <property type="component" value="Chromosome"/>
</dbReference>
<dbReference type="GO" id="GO:0022625">
    <property type="term" value="C:cytosolic large ribosomal subunit"/>
    <property type="evidence" value="ECO:0007669"/>
    <property type="project" value="TreeGrafter"/>
</dbReference>
<dbReference type="GO" id="GO:0003735">
    <property type="term" value="F:structural constituent of ribosome"/>
    <property type="evidence" value="ECO:0007669"/>
    <property type="project" value="InterPro"/>
</dbReference>
<dbReference type="GO" id="GO:0006412">
    <property type="term" value="P:translation"/>
    <property type="evidence" value="ECO:0007669"/>
    <property type="project" value="UniProtKB-UniRule"/>
</dbReference>
<dbReference type="CDD" id="cd00427">
    <property type="entry name" value="Ribosomal_L29_HIP"/>
    <property type="match status" value="1"/>
</dbReference>
<dbReference type="Gene3D" id="6.10.140.1970">
    <property type="match status" value="1"/>
</dbReference>
<dbReference type="HAMAP" id="MF_00374">
    <property type="entry name" value="Ribosomal_uL29"/>
    <property type="match status" value="1"/>
</dbReference>
<dbReference type="InterPro" id="IPR050063">
    <property type="entry name" value="Ribosomal_protein_uL29"/>
</dbReference>
<dbReference type="InterPro" id="IPR001854">
    <property type="entry name" value="Ribosomal_uL29"/>
</dbReference>
<dbReference type="InterPro" id="IPR018254">
    <property type="entry name" value="Ribosomal_uL29_CS"/>
</dbReference>
<dbReference type="InterPro" id="IPR036049">
    <property type="entry name" value="Ribosomal_uL29_sf"/>
</dbReference>
<dbReference type="NCBIfam" id="TIGR00012">
    <property type="entry name" value="L29"/>
    <property type="match status" value="1"/>
</dbReference>
<dbReference type="PANTHER" id="PTHR10916">
    <property type="entry name" value="60S RIBOSOMAL PROTEIN L35/50S RIBOSOMAL PROTEIN L29"/>
    <property type="match status" value="1"/>
</dbReference>
<dbReference type="PANTHER" id="PTHR10916:SF0">
    <property type="entry name" value="LARGE RIBOSOMAL SUBUNIT PROTEIN UL29C"/>
    <property type="match status" value="1"/>
</dbReference>
<dbReference type="Pfam" id="PF00831">
    <property type="entry name" value="Ribosomal_L29"/>
    <property type="match status" value="1"/>
</dbReference>
<dbReference type="SUPFAM" id="SSF46561">
    <property type="entry name" value="Ribosomal protein L29 (L29p)"/>
    <property type="match status" value="1"/>
</dbReference>
<dbReference type="PROSITE" id="PS00579">
    <property type="entry name" value="RIBOSOMAL_L29"/>
    <property type="match status" value="1"/>
</dbReference>
<organism>
    <name type="scientific">Salmonella heidelberg (strain SL476)</name>
    <dbReference type="NCBI Taxonomy" id="454169"/>
    <lineage>
        <taxon>Bacteria</taxon>
        <taxon>Pseudomonadati</taxon>
        <taxon>Pseudomonadota</taxon>
        <taxon>Gammaproteobacteria</taxon>
        <taxon>Enterobacterales</taxon>
        <taxon>Enterobacteriaceae</taxon>
        <taxon>Salmonella</taxon>
    </lineage>
</organism>
<comment type="similarity">
    <text evidence="1">Belongs to the universal ribosomal protein uL29 family.</text>
</comment>